<keyword id="KW-0001">2Fe-2S</keyword>
<keyword id="KW-0004">4Fe-4S</keyword>
<keyword id="KW-0093">Biotin biosynthesis</keyword>
<keyword id="KW-0408">Iron</keyword>
<keyword id="KW-0411">Iron-sulfur</keyword>
<keyword id="KW-0479">Metal-binding</keyword>
<keyword id="KW-1185">Reference proteome</keyword>
<keyword id="KW-0949">S-adenosyl-L-methionine</keyword>
<keyword id="KW-0808">Transferase</keyword>
<gene>
    <name evidence="1" type="primary">bioB</name>
    <name type="ordered locus">SRU_0756</name>
</gene>
<evidence type="ECO:0000255" key="1">
    <source>
        <dbReference type="HAMAP-Rule" id="MF_01694"/>
    </source>
</evidence>
<evidence type="ECO:0000255" key="2">
    <source>
        <dbReference type="PROSITE-ProRule" id="PRU01266"/>
    </source>
</evidence>
<evidence type="ECO:0000256" key="3">
    <source>
        <dbReference type="SAM" id="MobiDB-lite"/>
    </source>
</evidence>
<accession>Q2S4I8</accession>
<sequence length="359" mass="39005">MTAWRTLATQVLNGTPLSSSQALDVVHADDDEVLALLDAAFRVRRHHHGRRVRIHVLQNAKSGVCPEDCAFCSQSLKFDSDPEQYGMQQVDQIVEGAKAAWDKGAVTYCIVTATRGPHSSEVDVVCEATRRIKETYPMDVCASLGLLDAKQARKLADAGVDRYNHNLETSCDHFGNVVTTHEWSDRVETVKQAKAAGMEACCGGIIGLGEARADWVDLALALREIGVESVPVNFLNPRSGTPLEDVDTVRPQDCLKALAMFRLVHPEADLRMAGGREVVLDQMQPLALYAANSFFTDGYLTTGGQGESKDYRMIQQAGFEPVIVEDGPERQTPATADDTPSGDPEAADRRRQPSAGPAG</sequence>
<name>BIOB_SALRD</name>
<reference key="1">
    <citation type="journal article" date="2005" name="Proc. Natl. Acad. Sci. U.S.A.">
        <title>The genome of Salinibacter ruber: convergence and gene exchange among hyperhalophilic bacteria and archaea.</title>
        <authorList>
            <person name="Mongodin E.F."/>
            <person name="Nelson K.E."/>
            <person name="Daugherty S."/>
            <person name="DeBoy R.T."/>
            <person name="Wister J."/>
            <person name="Khouri H."/>
            <person name="Weidman J."/>
            <person name="Walsh D.A."/>
            <person name="Papke R.T."/>
            <person name="Sanchez Perez G."/>
            <person name="Sharma A.K."/>
            <person name="Nesbo C.L."/>
            <person name="MacLeod D."/>
            <person name="Bapteste E."/>
            <person name="Doolittle W.F."/>
            <person name="Charlebois R.L."/>
            <person name="Legault B."/>
            <person name="Rodriguez-Valera F."/>
        </authorList>
    </citation>
    <scope>NUCLEOTIDE SEQUENCE [LARGE SCALE GENOMIC DNA]</scope>
    <source>
        <strain>DSM 13855 / CECT 5946 / M31</strain>
    </source>
</reference>
<organism>
    <name type="scientific">Salinibacter ruber (strain DSM 13855 / M31)</name>
    <dbReference type="NCBI Taxonomy" id="309807"/>
    <lineage>
        <taxon>Bacteria</taxon>
        <taxon>Pseudomonadati</taxon>
        <taxon>Rhodothermota</taxon>
        <taxon>Rhodothermia</taxon>
        <taxon>Rhodothermales</taxon>
        <taxon>Salinibacteraceae</taxon>
        <taxon>Salinibacter</taxon>
    </lineage>
</organism>
<comment type="function">
    <text evidence="1">Catalyzes the conversion of dethiobiotin (DTB) to biotin by the insertion of a sulfur atom into dethiobiotin via a radical-based mechanism.</text>
</comment>
<comment type="catalytic activity">
    <reaction evidence="1">
        <text>(4R,5S)-dethiobiotin + (sulfur carrier)-SH + 2 reduced [2Fe-2S]-[ferredoxin] + 2 S-adenosyl-L-methionine = (sulfur carrier)-H + biotin + 2 5'-deoxyadenosine + 2 L-methionine + 2 oxidized [2Fe-2S]-[ferredoxin]</text>
        <dbReference type="Rhea" id="RHEA:22060"/>
        <dbReference type="Rhea" id="RHEA-COMP:10000"/>
        <dbReference type="Rhea" id="RHEA-COMP:10001"/>
        <dbReference type="Rhea" id="RHEA-COMP:14737"/>
        <dbReference type="Rhea" id="RHEA-COMP:14739"/>
        <dbReference type="ChEBI" id="CHEBI:17319"/>
        <dbReference type="ChEBI" id="CHEBI:29917"/>
        <dbReference type="ChEBI" id="CHEBI:33737"/>
        <dbReference type="ChEBI" id="CHEBI:33738"/>
        <dbReference type="ChEBI" id="CHEBI:57586"/>
        <dbReference type="ChEBI" id="CHEBI:57844"/>
        <dbReference type="ChEBI" id="CHEBI:59789"/>
        <dbReference type="ChEBI" id="CHEBI:64428"/>
        <dbReference type="ChEBI" id="CHEBI:149473"/>
        <dbReference type="EC" id="2.8.1.6"/>
    </reaction>
</comment>
<comment type="cofactor">
    <cofactor evidence="1">
        <name>[4Fe-4S] cluster</name>
        <dbReference type="ChEBI" id="CHEBI:49883"/>
    </cofactor>
    <text evidence="1">Binds 1 [4Fe-4S] cluster. The cluster is coordinated with 3 cysteines and an exchangeable S-adenosyl-L-methionine.</text>
</comment>
<comment type="cofactor">
    <cofactor evidence="1">
        <name>[2Fe-2S] cluster</name>
        <dbReference type="ChEBI" id="CHEBI:190135"/>
    </cofactor>
    <text evidence="1">Binds 1 [2Fe-2S] cluster. The cluster is coordinated with 3 cysteines and 1 arginine.</text>
</comment>
<comment type="pathway">
    <text evidence="1">Cofactor biosynthesis; biotin biosynthesis; biotin from 7,8-diaminononanoate: step 2/2.</text>
</comment>
<comment type="subunit">
    <text evidence="1">Homodimer.</text>
</comment>
<comment type="similarity">
    <text evidence="1">Belongs to the radical SAM superfamily. Biotin synthase family.</text>
</comment>
<protein>
    <recommendedName>
        <fullName evidence="1">Biotin synthase</fullName>
        <ecNumber evidence="1">2.8.1.6</ecNumber>
    </recommendedName>
</protein>
<feature type="chain" id="PRO_0000381607" description="Biotin synthase">
    <location>
        <begin position="1"/>
        <end position="359"/>
    </location>
</feature>
<feature type="domain" description="Radical SAM core" evidence="2">
    <location>
        <begin position="47"/>
        <end position="276"/>
    </location>
</feature>
<feature type="region of interest" description="Disordered" evidence="3">
    <location>
        <begin position="320"/>
        <end position="359"/>
    </location>
</feature>
<feature type="binding site" evidence="1">
    <location>
        <position position="65"/>
    </location>
    <ligand>
        <name>[4Fe-4S] cluster</name>
        <dbReference type="ChEBI" id="CHEBI:49883"/>
        <note>4Fe-4S-S-AdoMet</note>
    </ligand>
</feature>
<feature type="binding site" evidence="1">
    <location>
        <position position="69"/>
    </location>
    <ligand>
        <name>[4Fe-4S] cluster</name>
        <dbReference type="ChEBI" id="CHEBI:49883"/>
        <note>4Fe-4S-S-AdoMet</note>
    </ligand>
</feature>
<feature type="binding site" evidence="1">
    <location>
        <position position="72"/>
    </location>
    <ligand>
        <name>[4Fe-4S] cluster</name>
        <dbReference type="ChEBI" id="CHEBI:49883"/>
        <note>4Fe-4S-S-AdoMet</note>
    </ligand>
</feature>
<feature type="binding site" evidence="1">
    <location>
        <position position="109"/>
    </location>
    <ligand>
        <name>[2Fe-2S] cluster</name>
        <dbReference type="ChEBI" id="CHEBI:190135"/>
    </ligand>
</feature>
<feature type="binding site" evidence="1">
    <location>
        <position position="141"/>
    </location>
    <ligand>
        <name>[2Fe-2S] cluster</name>
        <dbReference type="ChEBI" id="CHEBI:190135"/>
    </ligand>
</feature>
<feature type="binding site" evidence="1">
    <location>
        <position position="201"/>
    </location>
    <ligand>
        <name>[2Fe-2S] cluster</name>
        <dbReference type="ChEBI" id="CHEBI:190135"/>
    </ligand>
</feature>
<feature type="binding site" evidence="1">
    <location>
        <position position="271"/>
    </location>
    <ligand>
        <name>[2Fe-2S] cluster</name>
        <dbReference type="ChEBI" id="CHEBI:190135"/>
    </ligand>
</feature>
<proteinExistence type="inferred from homology"/>
<dbReference type="EC" id="2.8.1.6" evidence="1"/>
<dbReference type="EMBL" id="CP000159">
    <property type="protein sequence ID" value="ABC44565.1"/>
    <property type="molecule type" value="Genomic_DNA"/>
</dbReference>
<dbReference type="RefSeq" id="WP_011403522.1">
    <property type="nucleotide sequence ID" value="NC_007677.1"/>
</dbReference>
<dbReference type="RefSeq" id="YP_444893.1">
    <property type="nucleotide sequence ID" value="NC_007677.1"/>
</dbReference>
<dbReference type="SMR" id="Q2S4I8"/>
<dbReference type="STRING" id="309807.SRU_0756"/>
<dbReference type="EnsemblBacteria" id="ABC44565">
    <property type="protein sequence ID" value="ABC44565"/>
    <property type="gene ID" value="SRU_0756"/>
</dbReference>
<dbReference type="KEGG" id="sru:SRU_0756"/>
<dbReference type="PATRIC" id="fig|309807.25.peg.778"/>
<dbReference type="eggNOG" id="COG0502">
    <property type="taxonomic scope" value="Bacteria"/>
</dbReference>
<dbReference type="HOGENOM" id="CLU_033172_2_1_10"/>
<dbReference type="OrthoDB" id="9786826at2"/>
<dbReference type="UniPathway" id="UPA00078">
    <property type="reaction ID" value="UER00162"/>
</dbReference>
<dbReference type="Proteomes" id="UP000008674">
    <property type="component" value="Chromosome"/>
</dbReference>
<dbReference type="GO" id="GO:0051537">
    <property type="term" value="F:2 iron, 2 sulfur cluster binding"/>
    <property type="evidence" value="ECO:0007669"/>
    <property type="project" value="UniProtKB-KW"/>
</dbReference>
<dbReference type="GO" id="GO:0051539">
    <property type="term" value="F:4 iron, 4 sulfur cluster binding"/>
    <property type="evidence" value="ECO:0007669"/>
    <property type="project" value="UniProtKB-KW"/>
</dbReference>
<dbReference type="GO" id="GO:0004076">
    <property type="term" value="F:biotin synthase activity"/>
    <property type="evidence" value="ECO:0007669"/>
    <property type="project" value="UniProtKB-UniRule"/>
</dbReference>
<dbReference type="GO" id="GO:0005506">
    <property type="term" value="F:iron ion binding"/>
    <property type="evidence" value="ECO:0007669"/>
    <property type="project" value="UniProtKB-UniRule"/>
</dbReference>
<dbReference type="GO" id="GO:0009102">
    <property type="term" value="P:biotin biosynthetic process"/>
    <property type="evidence" value="ECO:0007669"/>
    <property type="project" value="UniProtKB-UniRule"/>
</dbReference>
<dbReference type="CDD" id="cd01335">
    <property type="entry name" value="Radical_SAM"/>
    <property type="match status" value="1"/>
</dbReference>
<dbReference type="FunFam" id="3.20.20.70:FF:000026">
    <property type="entry name" value="Biotin synthase"/>
    <property type="match status" value="1"/>
</dbReference>
<dbReference type="Gene3D" id="3.20.20.70">
    <property type="entry name" value="Aldolase class I"/>
    <property type="match status" value="1"/>
</dbReference>
<dbReference type="HAMAP" id="MF_01694">
    <property type="entry name" value="BioB"/>
    <property type="match status" value="1"/>
</dbReference>
<dbReference type="InterPro" id="IPR013785">
    <property type="entry name" value="Aldolase_TIM"/>
</dbReference>
<dbReference type="InterPro" id="IPR010722">
    <property type="entry name" value="BATS_dom"/>
</dbReference>
<dbReference type="InterPro" id="IPR002684">
    <property type="entry name" value="Biotin_synth/BioAB"/>
</dbReference>
<dbReference type="InterPro" id="IPR024177">
    <property type="entry name" value="Biotin_synthase"/>
</dbReference>
<dbReference type="InterPro" id="IPR006638">
    <property type="entry name" value="Elp3/MiaA/NifB-like_rSAM"/>
</dbReference>
<dbReference type="InterPro" id="IPR007197">
    <property type="entry name" value="rSAM"/>
</dbReference>
<dbReference type="NCBIfam" id="TIGR00433">
    <property type="entry name" value="bioB"/>
    <property type="match status" value="1"/>
</dbReference>
<dbReference type="PANTHER" id="PTHR22976">
    <property type="entry name" value="BIOTIN SYNTHASE"/>
    <property type="match status" value="1"/>
</dbReference>
<dbReference type="PANTHER" id="PTHR22976:SF2">
    <property type="entry name" value="BIOTIN SYNTHASE, MITOCHONDRIAL"/>
    <property type="match status" value="1"/>
</dbReference>
<dbReference type="Pfam" id="PF06968">
    <property type="entry name" value="BATS"/>
    <property type="match status" value="1"/>
</dbReference>
<dbReference type="Pfam" id="PF04055">
    <property type="entry name" value="Radical_SAM"/>
    <property type="match status" value="1"/>
</dbReference>
<dbReference type="PIRSF" id="PIRSF001619">
    <property type="entry name" value="Biotin_synth"/>
    <property type="match status" value="1"/>
</dbReference>
<dbReference type="SFLD" id="SFLDG01278">
    <property type="entry name" value="biotin_synthase_like"/>
    <property type="match status" value="1"/>
</dbReference>
<dbReference type="SFLD" id="SFLDS00029">
    <property type="entry name" value="Radical_SAM"/>
    <property type="match status" value="1"/>
</dbReference>
<dbReference type="SMART" id="SM00876">
    <property type="entry name" value="BATS"/>
    <property type="match status" value="1"/>
</dbReference>
<dbReference type="SMART" id="SM00729">
    <property type="entry name" value="Elp3"/>
    <property type="match status" value="1"/>
</dbReference>
<dbReference type="SUPFAM" id="SSF102114">
    <property type="entry name" value="Radical SAM enzymes"/>
    <property type="match status" value="1"/>
</dbReference>
<dbReference type="PROSITE" id="PS51918">
    <property type="entry name" value="RADICAL_SAM"/>
    <property type="match status" value="1"/>
</dbReference>